<sequence>MFLRQEDFAAVVRTTPLISLDFIVENGQGEILLGQRLNRPAQGYWFVPGGRVCKDETLEAAFARLTQAELGVRLPLAAGTFYGVWQHFYDDNFSSEDFSTHYIVLGFRLRVAESDLRLPDAQHGSYRWLTPEQLLAGDNVHENSRAYFSPDAPAVGL</sequence>
<proteinExistence type="inferred from homology"/>
<evidence type="ECO:0000255" key="1">
    <source>
        <dbReference type="HAMAP-Rule" id="MF_00941"/>
    </source>
</evidence>
<evidence type="ECO:0000305" key="2"/>
<protein>
    <recommendedName>
        <fullName evidence="1">GDP-mannose mannosyl hydrolase</fullName>
        <shortName evidence="1">GDPMH</shortName>
        <ecNumber evidence="1">3.6.1.-</ecNumber>
    </recommendedName>
</protein>
<feature type="chain" id="PRO_0000056985" description="GDP-mannose mannosyl hydrolase">
    <location>
        <begin position="1"/>
        <end position="157"/>
    </location>
</feature>
<feature type="domain" description="Nudix hydrolase" evidence="1">
    <location>
        <begin position="3"/>
        <end position="153"/>
    </location>
</feature>
<feature type="short sequence motif" description="Nudix box">
    <location>
        <begin position="50"/>
        <end position="71"/>
    </location>
</feature>
<feature type="binding site" evidence="1">
    <location>
        <begin position="2"/>
        <end position="3"/>
    </location>
    <ligand>
        <name>substrate</name>
    </ligand>
</feature>
<feature type="binding site" evidence="1">
    <location>
        <position position="8"/>
    </location>
    <ligand>
        <name>substrate</name>
    </ligand>
</feature>
<feature type="binding site" evidence="1">
    <location>
        <position position="36"/>
    </location>
    <ligand>
        <name>substrate</name>
    </ligand>
</feature>
<feature type="binding site" evidence="1">
    <location>
        <position position="49"/>
    </location>
    <ligand>
        <name>Mg(2+)</name>
        <dbReference type="ChEBI" id="CHEBI:18420"/>
    </ligand>
</feature>
<feature type="binding site" evidence="1">
    <location>
        <position position="69"/>
    </location>
    <ligand>
        <name>Mg(2+)</name>
        <dbReference type="ChEBI" id="CHEBI:18420"/>
    </ligand>
</feature>
<feature type="binding site" evidence="1">
    <location>
        <position position="122"/>
    </location>
    <ligand>
        <name>Mg(2+)</name>
        <dbReference type="ChEBI" id="CHEBI:18420"/>
    </ligand>
</feature>
<reference key="1">
    <citation type="journal article" date="2001" name="Nature">
        <title>Complete genome sequence of a multiple drug resistant Salmonella enterica serovar Typhi CT18.</title>
        <authorList>
            <person name="Parkhill J."/>
            <person name="Dougan G."/>
            <person name="James K.D."/>
            <person name="Thomson N.R."/>
            <person name="Pickard D."/>
            <person name="Wain J."/>
            <person name="Churcher C.M."/>
            <person name="Mungall K.L."/>
            <person name="Bentley S.D."/>
            <person name="Holden M.T.G."/>
            <person name="Sebaihia M."/>
            <person name="Baker S."/>
            <person name="Basham D."/>
            <person name="Brooks K."/>
            <person name="Chillingworth T."/>
            <person name="Connerton P."/>
            <person name="Cronin A."/>
            <person name="Davis P."/>
            <person name="Davies R.M."/>
            <person name="Dowd L."/>
            <person name="White N."/>
            <person name="Farrar J."/>
            <person name="Feltwell T."/>
            <person name="Hamlin N."/>
            <person name="Haque A."/>
            <person name="Hien T.T."/>
            <person name="Holroyd S."/>
            <person name="Jagels K."/>
            <person name="Krogh A."/>
            <person name="Larsen T.S."/>
            <person name="Leather S."/>
            <person name="Moule S."/>
            <person name="O'Gaora P."/>
            <person name="Parry C."/>
            <person name="Quail M.A."/>
            <person name="Rutherford K.M."/>
            <person name="Simmonds M."/>
            <person name="Skelton J."/>
            <person name="Stevens K."/>
            <person name="Whitehead S."/>
            <person name="Barrell B.G."/>
        </authorList>
    </citation>
    <scope>NUCLEOTIDE SEQUENCE [LARGE SCALE GENOMIC DNA]</scope>
    <source>
        <strain>CT18</strain>
    </source>
</reference>
<reference key="2">
    <citation type="journal article" date="2003" name="J. Bacteriol.">
        <title>Comparative genomics of Salmonella enterica serovar Typhi strains Ty2 and CT18.</title>
        <authorList>
            <person name="Deng W."/>
            <person name="Liou S.-R."/>
            <person name="Plunkett G. III"/>
            <person name="Mayhew G.F."/>
            <person name="Rose D.J."/>
            <person name="Burland V."/>
            <person name="Kodoyianni V."/>
            <person name="Schwartz D.C."/>
            <person name="Blattner F.R."/>
        </authorList>
    </citation>
    <scope>NUCLEOTIDE SEQUENCE [LARGE SCALE GENOMIC DNA]</scope>
    <source>
        <strain>ATCC 700931 / Ty2</strain>
    </source>
</reference>
<accession>Q8Z5H2</accession>
<comment type="function">
    <text evidence="1">Hydrolyzes GDP-mannose.</text>
</comment>
<comment type="catalytic activity">
    <reaction evidence="1">
        <text>GDP-alpha-D-mannose + H2O = D-mannose + GDP + H(+)</text>
        <dbReference type="Rhea" id="RHEA:28102"/>
        <dbReference type="ChEBI" id="CHEBI:4208"/>
        <dbReference type="ChEBI" id="CHEBI:15377"/>
        <dbReference type="ChEBI" id="CHEBI:15378"/>
        <dbReference type="ChEBI" id="CHEBI:57527"/>
        <dbReference type="ChEBI" id="CHEBI:58189"/>
    </reaction>
</comment>
<comment type="cofactor">
    <cofactor evidence="1">
        <name>Mg(2+)</name>
        <dbReference type="ChEBI" id="CHEBI:18420"/>
    </cofactor>
    <text evidence="1">Binds 1 Mg(2+) ion per subunit.</text>
</comment>
<comment type="subunit">
    <text evidence="1">Homodimer.</text>
</comment>
<comment type="similarity">
    <text evidence="1">Belongs to the Nudix hydrolase family.</text>
</comment>
<comment type="sequence caution" evidence="2">
    <conflict type="erroneous initiation">
        <sequence resource="EMBL-CDS" id="AAO68457"/>
    </conflict>
    <text>Extended N-terminus.</text>
</comment>
<comment type="sequence caution" evidence="2">
    <conflict type="erroneous initiation">
        <sequence resource="EMBL-CDS" id="CAD02470"/>
    </conflict>
    <text>Extended N-terminus.</text>
</comment>
<gene>
    <name evidence="1" type="primary">gmm</name>
    <name type="synonym">nudD</name>
    <name type="synonym">wcaH</name>
    <name type="ordered locus">STY2319</name>
    <name type="ordered locus">t0764</name>
</gene>
<dbReference type="EC" id="3.6.1.-" evidence="1"/>
<dbReference type="EMBL" id="AL513382">
    <property type="protein sequence ID" value="CAD02470.1"/>
    <property type="status" value="ALT_INIT"/>
    <property type="molecule type" value="Genomic_DNA"/>
</dbReference>
<dbReference type="EMBL" id="AE014613">
    <property type="protein sequence ID" value="AAO68457.1"/>
    <property type="status" value="ALT_INIT"/>
    <property type="molecule type" value="Genomic_DNA"/>
</dbReference>
<dbReference type="PIR" id="AH0768">
    <property type="entry name" value="AH0768"/>
</dbReference>
<dbReference type="RefSeq" id="NP_456655.1">
    <property type="nucleotide sequence ID" value="NC_003198.1"/>
</dbReference>
<dbReference type="RefSeq" id="WP_001688181.1">
    <property type="nucleotide sequence ID" value="NZ_WSUR01000002.1"/>
</dbReference>
<dbReference type="SMR" id="Q8Z5H2"/>
<dbReference type="STRING" id="220341.gene:17586225"/>
<dbReference type="KEGG" id="stt:t0764"/>
<dbReference type="KEGG" id="sty:STY2319"/>
<dbReference type="PATRIC" id="fig|220341.7.peg.2339"/>
<dbReference type="eggNOG" id="COG1051">
    <property type="taxonomic scope" value="Bacteria"/>
</dbReference>
<dbReference type="HOGENOM" id="CLU_037162_12_0_6"/>
<dbReference type="OMA" id="HDNSRAY"/>
<dbReference type="OrthoDB" id="542521at2"/>
<dbReference type="Proteomes" id="UP000000541">
    <property type="component" value="Chromosome"/>
</dbReference>
<dbReference type="Proteomes" id="UP000002670">
    <property type="component" value="Chromosome"/>
</dbReference>
<dbReference type="GO" id="GO:0008727">
    <property type="term" value="F:GDP-mannose mannosyl hydrolase activity"/>
    <property type="evidence" value="ECO:0007669"/>
    <property type="project" value="UniProtKB-UniRule"/>
</dbReference>
<dbReference type="GO" id="GO:0000287">
    <property type="term" value="F:magnesium ion binding"/>
    <property type="evidence" value="ECO:0007669"/>
    <property type="project" value="UniProtKB-UniRule"/>
</dbReference>
<dbReference type="GO" id="GO:0030145">
    <property type="term" value="F:manganese ion binding"/>
    <property type="evidence" value="ECO:0007669"/>
    <property type="project" value="InterPro"/>
</dbReference>
<dbReference type="CDD" id="cd03430">
    <property type="entry name" value="NUDIX_GDPMH_NudD"/>
    <property type="match status" value="1"/>
</dbReference>
<dbReference type="Gene3D" id="3.90.79.10">
    <property type="entry name" value="Nucleoside Triphosphate Pyrophosphohydrolase"/>
    <property type="match status" value="1"/>
</dbReference>
<dbReference type="HAMAP" id="MF_00941">
    <property type="entry name" value="GDPMH_gmm"/>
    <property type="match status" value="1"/>
</dbReference>
<dbReference type="InterPro" id="IPR033715">
    <property type="entry name" value="GDPMH"/>
</dbReference>
<dbReference type="InterPro" id="IPR028613">
    <property type="entry name" value="GDPMH_Gmm"/>
</dbReference>
<dbReference type="InterPro" id="IPR015797">
    <property type="entry name" value="NUDIX_hydrolase-like_dom_sf"/>
</dbReference>
<dbReference type="InterPro" id="IPR020084">
    <property type="entry name" value="NUDIX_hydrolase_CS"/>
</dbReference>
<dbReference type="InterPro" id="IPR000086">
    <property type="entry name" value="NUDIX_hydrolase_dom"/>
</dbReference>
<dbReference type="NCBIfam" id="NF011963">
    <property type="entry name" value="PRK15434.1"/>
    <property type="match status" value="1"/>
</dbReference>
<dbReference type="PANTHER" id="PTHR43046">
    <property type="entry name" value="GDP-MANNOSE MANNOSYL HYDROLASE"/>
    <property type="match status" value="1"/>
</dbReference>
<dbReference type="PANTHER" id="PTHR43046:SF12">
    <property type="entry name" value="GDP-MANNOSE MANNOSYL HYDROLASE"/>
    <property type="match status" value="1"/>
</dbReference>
<dbReference type="Pfam" id="PF00293">
    <property type="entry name" value="NUDIX"/>
    <property type="match status" value="1"/>
</dbReference>
<dbReference type="PIRSF" id="PIRSF037599">
    <property type="entry name" value="GDPMH"/>
    <property type="match status" value="1"/>
</dbReference>
<dbReference type="SUPFAM" id="SSF55811">
    <property type="entry name" value="Nudix"/>
    <property type="match status" value="1"/>
</dbReference>
<dbReference type="PROSITE" id="PS51462">
    <property type="entry name" value="NUDIX"/>
    <property type="match status" value="1"/>
</dbReference>
<dbReference type="PROSITE" id="PS00893">
    <property type="entry name" value="NUDIX_BOX"/>
    <property type="match status" value="1"/>
</dbReference>
<organism>
    <name type="scientific">Salmonella typhi</name>
    <dbReference type="NCBI Taxonomy" id="90370"/>
    <lineage>
        <taxon>Bacteria</taxon>
        <taxon>Pseudomonadati</taxon>
        <taxon>Pseudomonadota</taxon>
        <taxon>Gammaproteobacteria</taxon>
        <taxon>Enterobacterales</taxon>
        <taxon>Enterobacteriaceae</taxon>
        <taxon>Salmonella</taxon>
    </lineage>
</organism>
<name>GMM_SALTI</name>
<keyword id="KW-0378">Hydrolase</keyword>
<keyword id="KW-0460">Magnesium</keyword>
<keyword id="KW-0479">Metal-binding</keyword>